<gene>
    <name evidence="3" type="primary">tubR</name>
    <name type="ordered locus">BCE_A0069</name>
</gene>
<accession>Q74P25</accession>
<comment type="function">
    <text evidence="1 2 6">A DNA-binding protein that is part of the type III plasmid partition system used to ensure correct segregation of the pBc10987 plasmid (Probable). Binds TubZ filaments but does not influence the GTPase activity of TubZ with or without DNA (PubMed:22847006). Cooperatively binds to multiple regions in tubC (centromere-like site) upstream of its own gene with consensus sequence N(T/A)ATTNC(C/G)GNAAT(A/T)N; probably forms an extended DNA-protein filament. Binds sites in its own promoter region and presumably represses its expression; its effect on RNA expression has not been shown. Does not specifically bind to the putative origin of replication on pBc10987 (PubMed:30414406).</text>
</comment>
<comment type="subunit">
    <text evidence="1 2">Homodimer (PubMed:30414406). Binds to TubZ filaments via the C-terminus of TubZ. DNA is not required for binding to TubZ (PubMed:22847006).</text>
</comment>
<comment type="induction">
    <text evidence="2">Probably part of the tubR-tubZ operon.</text>
</comment>
<comment type="domain">
    <text evidence="2">Although this has the same function as TubR of B.thuringiensis subsp. israelensis there is little sequence homology and the dimerization interface is different.</text>
</comment>
<comment type="disruption phenotype">
    <text evidence="2">Increased expression of TubZ.</text>
</comment>
<protein>
    <recommendedName>
        <fullName evidence="5">DNA-binding protein TubR</fullName>
    </recommendedName>
    <alternativeName>
        <fullName evidence="4">Centromere-binding protein</fullName>
    </alternativeName>
    <alternativeName>
        <fullName evidence="3">TubR-Bc</fullName>
    </alternativeName>
</protein>
<reference key="1">
    <citation type="journal article" date="2004" name="Nucleic Acids Res.">
        <title>The genome sequence of Bacillus cereus ATCC 10987 reveals metabolic adaptations and a large plasmid related to Bacillus anthracis pXO1.</title>
        <authorList>
            <person name="Rasko D.A."/>
            <person name="Ravel J."/>
            <person name="Oekstad O.A."/>
            <person name="Helgason E."/>
            <person name="Cer R.Z."/>
            <person name="Jiang L."/>
            <person name="Shores K.A."/>
            <person name="Fouts D.E."/>
            <person name="Tourasse N.J."/>
            <person name="Angiuoli S.V."/>
            <person name="Kolonay J.F."/>
            <person name="Nelson W.C."/>
            <person name="Kolstoe A.-B."/>
            <person name="Fraser C.M."/>
            <person name="Read T.D."/>
        </authorList>
    </citation>
    <scope>NUCLEOTIDE SEQUENCE [LARGE SCALE GENOMIC DNA]</scope>
    <source>
        <strain>ATCC 10987 / NRS 248</strain>
        <plasmid>pBc10987</plasmid>
    </source>
</reference>
<reference key="2">
    <citation type="journal article" date="2012" name="J. Biol. Chem.">
        <title>Filament formation of the FtsZ/tubulin-like protein TubZ from the Bacillus cereus pXO1 plasmid.</title>
        <authorList>
            <person name="Hoshino S."/>
            <person name="Hayashi I."/>
        </authorList>
    </citation>
    <scope>FUNCTION</scope>
    <scope>SUBUNIT</scope>
    <source>
        <strain>ATCC 10987 / NRS 248</strain>
        <plasmid>pBc10987</plasmid>
    </source>
</reference>
<reference evidence="7" key="3">
    <citation type="journal article" date="2018" name="J. Mol. Biol.">
        <title>Cooperative DNA Binding of the Plasmid Partitioning Protein TubR from the Bacillus cereus pXO1 Plasmid.</title>
        <authorList>
            <person name="Hayashi I."/>
            <person name="Oda T."/>
            <person name="Sato M."/>
            <person name="Fuchigami S."/>
        </authorList>
    </citation>
    <scope>X-RAY CRYSTALLOGRAPHY (2.00 ANGSTROMS) OF 5-114 AND 7-119</scope>
    <scope>FUNCTION</scope>
    <scope>SUBUNIT</scope>
    <scope>PROBABLE OPERON</scope>
    <scope>DISRUPTION PHENOTYPE</scope>
    <scope>MUTAGENESIS OF TYR-72; GLU-82 AND ARG-94</scope>
    <scope>DNA-BINDING</scope>
    <source>
        <strain>ATCC 10987 / NRS 248</strain>
        <plasmid>pBc10987</plasmid>
    </source>
</reference>
<feature type="chain" id="PRO_0000448565" description="DNA-binding protein TubR">
    <location>
        <begin position="1"/>
        <end position="119"/>
    </location>
</feature>
<feature type="mutagenesis site" description="No DNA binding." evidence="2">
    <original>Y</original>
    <variation>A</variation>
    <location>
        <position position="72"/>
    </location>
</feature>
<feature type="mutagenesis site" description="Decreased DNA binding." evidence="2">
    <original>E</original>
    <variation>R</variation>
    <location>
        <position position="82"/>
    </location>
</feature>
<feature type="mutagenesis site" description="No DNA binding." evidence="2">
    <original>R</original>
    <variation>A</variation>
    <location>
        <position position="94"/>
    </location>
</feature>
<sequence length="119" mass="13759">MKLLSNISMSSSEIIDVLCENLNDGIWALRVLYAEGAMNKEKLWDYINQYHKDYQIENEKDYEGKKILPSRYALDIMTARLEGAGLISFKAIGRVRIYDVTDLGNVLIKELEKRVEKNN</sequence>
<name>TUBR_BACC1</name>
<proteinExistence type="evidence at protein level"/>
<geneLocation type="plasmid">
    <name>pBc10987</name>
</geneLocation>
<evidence type="ECO:0000269" key="1">
    <source>
    </source>
</evidence>
<evidence type="ECO:0000269" key="2">
    <source>
    </source>
</evidence>
<evidence type="ECO:0000303" key="3">
    <source>
    </source>
</evidence>
<evidence type="ECO:0000303" key="4">
    <source>
    </source>
</evidence>
<evidence type="ECO:0000305" key="5"/>
<evidence type="ECO:0000305" key="6">
    <source>
    </source>
</evidence>
<evidence type="ECO:0007744" key="7">
    <source>
        <dbReference type="PDB" id="6AHT"/>
    </source>
</evidence>
<organism>
    <name type="scientific">Bacillus cereus (strain ATCC 10987 / NRS 248)</name>
    <dbReference type="NCBI Taxonomy" id="222523"/>
    <lineage>
        <taxon>Bacteria</taxon>
        <taxon>Bacillati</taxon>
        <taxon>Bacillota</taxon>
        <taxon>Bacilli</taxon>
        <taxon>Bacillales</taxon>
        <taxon>Bacillaceae</taxon>
        <taxon>Bacillus</taxon>
        <taxon>Bacillus cereus group</taxon>
    </lineage>
</organism>
<dbReference type="EMBL" id="AE017195">
    <property type="protein sequence ID" value="AAS44919.1"/>
    <property type="molecule type" value="Genomic_DNA"/>
</dbReference>
<dbReference type="PDB" id="6AHT">
    <property type="method" value="X-ray"/>
    <property type="resolution" value="2.00 A"/>
    <property type="chains" value="A=5-114, B=7-119"/>
</dbReference>
<dbReference type="PDBsum" id="6AHT"/>
<dbReference type="SMR" id="Q74P25"/>
<dbReference type="KEGG" id="bca:BCE_A0069"/>
<dbReference type="HOGENOM" id="CLU_168768_0_0_9"/>
<dbReference type="Proteomes" id="UP000002527">
    <property type="component" value="Plasmid pBc10987"/>
</dbReference>
<dbReference type="GO" id="GO:0003677">
    <property type="term" value="F:DNA binding"/>
    <property type="evidence" value="ECO:0007669"/>
    <property type="project" value="UniProtKB-KW"/>
</dbReference>
<dbReference type="GO" id="GO:0030541">
    <property type="term" value="P:plasmid partitioning"/>
    <property type="evidence" value="ECO:0007669"/>
    <property type="project" value="UniProtKB-KW"/>
</dbReference>
<keyword id="KW-0002">3D-structure</keyword>
<keyword id="KW-0238">DNA-binding</keyword>
<keyword id="KW-0614">Plasmid</keyword>
<keyword id="KW-0616">Plasmid partition</keyword>
<keyword id="KW-0678">Repressor</keyword>
<keyword id="KW-0804">Transcription</keyword>
<keyword id="KW-0805">Transcription regulation</keyword>